<proteinExistence type="inferred from homology"/>
<protein>
    <recommendedName>
        <fullName evidence="1">Translation factor GUF1, mitochondrial</fullName>
        <ecNumber>3.6.5.-</ecNumber>
    </recommendedName>
    <alternativeName>
        <fullName evidence="1">Elongation factor 4 homolog</fullName>
        <shortName evidence="1">EF-4</shortName>
    </alternativeName>
    <alternativeName>
        <fullName evidence="1">GTPase GUF1</fullName>
    </alternativeName>
    <alternativeName>
        <fullName evidence="1">Ribosomal back-translocase</fullName>
    </alternativeName>
</protein>
<evidence type="ECO:0000255" key="1">
    <source>
        <dbReference type="HAMAP-Rule" id="MF_03137"/>
    </source>
</evidence>
<evidence type="ECO:0000305" key="2"/>
<reference key="1">
    <citation type="journal article" date="2009" name="Genome Res.">
        <title>Comparative genomics of protoploid Saccharomycetaceae.</title>
        <authorList>
            <consortium name="The Genolevures Consortium"/>
            <person name="Souciet J.-L."/>
            <person name="Dujon B."/>
            <person name="Gaillardin C."/>
            <person name="Johnston M."/>
            <person name="Baret P.V."/>
            <person name="Cliften P."/>
            <person name="Sherman D.J."/>
            <person name="Weissenbach J."/>
            <person name="Westhof E."/>
            <person name="Wincker P."/>
            <person name="Jubin C."/>
            <person name="Poulain J."/>
            <person name="Barbe V."/>
            <person name="Segurens B."/>
            <person name="Artiguenave F."/>
            <person name="Anthouard V."/>
            <person name="Vacherie B."/>
            <person name="Val M.-E."/>
            <person name="Fulton R.S."/>
            <person name="Minx P."/>
            <person name="Wilson R."/>
            <person name="Durrens P."/>
            <person name="Jean G."/>
            <person name="Marck C."/>
            <person name="Martin T."/>
            <person name="Nikolski M."/>
            <person name="Rolland T."/>
            <person name="Seret M.-L."/>
            <person name="Casaregola S."/>
            <person name="Despons L."/>
            <person name="Fairhead C."/>
            <person name="Fischer G."/>
            <person name="Lafontaine I."/>
            <person name="Leh V."/>
            <person name="Lemaire M."/>
            <person name="de Montigny J."/>
            <person name="Neuveglise C."/>
            <person name="Thierry A."/>
            <person name="Blanc-Lenfle I."/>
            <person name="Bleykasten C."/>
            <person name="Diffels J."/>
            <person name="Fritsch E."/>
            <person name="Frangeul L."/>
            <person name="Goeffon A."/>
            <person name="Jauniaux N."/>
            <person name="Kachouri-Lafond R."/>
            <person name="Payen C."/>
            <person name="Potier S."/>
            <person name="Pribylova L."/>
            <person name="Ozanne C."/>
            <person name="Richard G.-F."/>
            <person name="Sacerdot C."/>
            <person name="Straub M.-L."/>
            <person name="Talla E."/>
        </authorList>
    </citation>
    <scope>NUCLEOTIDE SEQUENCE [LARGE SCALE GENOMIC DNA]</scope>
    <source>
        <strain>ATCC 56472 / CBS 6340 / NRRL Y-8284</strain>
    </source>
</reference>
<dbReference type="EC" id="3.6.5.-"/>
<dbReference type="EMBL" id="CU928171">
    <property type="protein sequence ID" value="CAR25245.1"/>
    <property type="molecule type" value="Genomic_DNA"/>
</dbReference>
<dbReference type="RefSeq" id="XP_002555682.1">
    <property type="nucleotide sequence ID" value="XM_002555636.1"/>
</dbReference>
<dbReference type="SMR" id="C5DN84"/>
<dbReference type="FunCoup" id="C5DN84">
    <property type="interactions" value="766"/>
</dbReference>
<dbReference type="STRING" id="559295.C5DN84"/>
<dbReference type="GeneID" id="8293967"/>
<dbReference type="KEGG" id="lth:KLTH0G14938g"/>
<dbReference type="eggNOG" id="KOG0462">
    <property type="taxonomic scope" value="Eukaryota"/>
</dbReference>
<dbReference type="HOGENOM" id="CLU_009995_3_1_1"/>
<dbReference type="InParanoid" id="C5DN84"/>
<dbReference type="OMA" id="QVKCDEN"/>
<dbReference type="OrthoDB" id="1074at2759"/>
<dbReference type="Proteomes" id="UP000002036">
    <property type="component" value="Chromosome G"/>
</dbReference>
<dbReference type="GO" id="GO:0005743">
    <property type="term" value="C:mitochondrial inner membrane"/>
    <property type="evidence" value="ECO:0007669"/>
    <property type="project" value="UniProtKB-SubCell"/>
</dbReference>
<dbReference type="GO" id="GO:0005759">
    <property type="term" value="C:mitochondrial matrix"/>
    <property type="evidence" value="ECO:0007669"/>
    <property type="project" value="UniProtKB-UniRule"/>
</dbReference>
<dbReference type="GO" id="GO:0005525">
    <property type="term" value="F:GTP binding"/>
    <property type="evidence" value="ECO:0007669"/>
    <property type="project" value="UniProtKB-UniRule"/>
</dbReference>
<dbReference type="GO" id="GO:0003924">
    <property type="term" value="F:GTPase activity"/>
    <property type="evidence" value="ECO:0007669"/>
    <property type="project" value="UniProtKB-UniRule"/>
</dbReference>
<dbReference type="GO" id="GO:0097177">
    <property type="term" value="F:mitochondrial ribosome binding"/>
    <property type="evidence" value="ECO:0007669"/>
    <property type="project" value="TreeGrafter"/>
</dbReference>
<dbReference type="GO" id="GO:0045727">
    <property type="term" value="P:positive regulation of translation"/>
    <property type="evidence" value="ECO:0007669"/>
    <property type="project" value="UniProtKB-UniRule"/>
</dbReference>
<dbReference type="GO" id="GO:0006412">
    <property type="term" value="P:translation"/>
    <property type="evidence" value="ECO:0007669"/>
    <property type="project" value="UniProtKB-KW"/>
</dbReference>
<dbReference type="CDD" id="cd03699">
    <property type="entry name" value="EF4_II"/>
    <property type="match status" value="1"/>
</dbReference>
<dbReference type="CDD" id="cd16260">
    <property type="entry name" value="EF4_III"/>
    <property type="match status" value="1"/>
</dbReference>
<dbReference type="CDD" id="cd01890">
    <property type="entry name" value="LepA"/>
    <property type="match status" value="1"/>
</dbReference>
<dbReference type="CDD" id="cd03709">
    <property type="entry name" value="lepA_C"/>
    <property type="match status" value="1"/>
</dbReference>
<dbReference type="FunFam" id="3.40.50.300:FF:000078">
    <property type="entry name" value="Elongation factor 4"/>
    <property type="match status" value="1"/>
</dbReference>
<dbReference type="FunFam" id="2.40.30.10:FF:000015">
    <property type="entry name" value="Translation factor GUF1, mitochondrial"/>
    <property type="match status" value="1"/>
</dbReference>
<dbReference type="FunFam" id="3.30.70.240:FF:000007">
    <property type="entry name" value="Translation factor GUF1, mitochondrial"/>
    <property type="match status" value="1"/>
</dbReference>
<dbReference type="FunFam" id="3.30.70.2570:FF:000001">
    <property type="entry name" value="Translation factor GUF1, mitochondrial"/>
    <property type="match status" value="1"/>
</dbReference>
<dbReference type="FunFam" id="3.30.70.870:FF:000004">
    <property type="entry name" value="Translation factor GUF1, mitochondrial"/>
    <property type="match status" value="1"/>
</dbReference>
<dbReference type="Gene3D" id="3.30.70.240">
    <property type="match status" value="1"/>
</dbReference>
<dbReference type="Gene3D" id="3.30.70.2570">
    <property type="entry name" value="Elongation factor 4, C-terminal domain"/>
    <property type="match status" value="1"/>
</dbReference>
<dbReference type="Gene3D" id="3.30.70.870">
    <property type="entry name" value="Elongation Factor G (Translational Gtpase), domain 3"/>
    <property type="match status" value="1"/>
</dbReference>
<dbReference type="Gene3D" id="3.40.50.300">
    <property type="entry name" value="P-loop containing nucleotide triphosphate hydrolases"/>
    <property type="match status" value="1"/>
</dbReference>
<dbReference type="Gene3D" id="2.40.30.10">
    <property type="entry name" value="Translation factors"/>
    <property type="match status" value="1"/>
</dbReference>
<dbReference type="HAMAP" id="MF_00071">
    <property type="entry name" value="LepA"/>
    <property type="match status" value="1"/>
</dbReference>
<dbReference type="InterPro" id="IPR006297">
    <property type="entry name" value="EF-4"/>
</dbReference>
<dbReference type="InterPro" id="IPR035647">
    <property type="entry name" value="EFG_III/V"/>
</dbReference>
<dbReference type="InterPro" id="IPR000640">
    <property type="entry name" value="EFG_V-like"/>
</dbReference>
<dbReference type="InterPro" id="IPR004161">
    <property type="entry name" value="EFTu-like_2"/>
</dbReference>
<dbReference type="InterPro" id="IPR031157">
    <property type="entry name" value="G_TR_CS"/>
</dbReference>
<dbReference type="InterPro" id="IPR038363">
    <property type="entry name" value="LepA_C_sf"/>
</dbReference>
<dbReference type="InterPro" id="IPR013842">
    <property type="entry name" value="LepA_CTD"/>
</dbReference>
<dbReference type="InterPro" id="IPR035654">
    <property type="entry name" value="LepA_IV"/>
</dbReference>
<dbReference type="InterPro" id="IPR027417">
    <property type="entry name" value="P-loop_NTPase"/>
</dbReference>
<dbReference type="InterPro" id="IPR005225">
    <property type="entry name" value="Small_GTP-bd"/>
</dbReference>
<dbReference type="InterPro" id="IPR000795">
    <property type="entry name" value="T_Tr_GTP-bd_dom"/>
</dbReference>
<dbReference type="NCBIfam" id="TIGR01393">
    <property type="entry name" value="lepA"/>
    <property type="match status" value="1"/>
</dbReference>
<dbReference type="NCBIfam" id="TIGR00231">
    <property type="entry name" value="small_GTP"/>
    <property type="match status" value="1"/>
</dbReference>
<dbReference type="PANTHER" id="PTHR43512:SF7">
    <property type="entry name" value="TRANSLATION FACTOR GUF1, MITOCHONDRIAL"/>
    <property type="match status" value="1"/>
</dbReference>
<dbReference type="PANTHER" id="PTHR43512">
    <property type="entry name" value="TRANSLATION FACTOR GUF1-RELATED"/>
    <property type="match status" value="1"/>
</dbReference>
<dbReference type="Pfam" id="PF00679">
    <property type="entry name" value="EFG_C"/>
    <property type="match status" value="1"/>
</dbReference>
<dbReference type="Pfam" id="PF00009">
    <property type="entry name" value="GTP_EFTU"/>
    <property type="match status" value="1"/>
</dbReference>
<dbReference type="Pfam" id="PF03144">
    <property type="entry name" value="GTP_EFTU_D2"/>
    <property type="match status" value="1"/>
</dbReference>
<dbReference type="Pfam" id="PF06421">
    <property type="entry name" value="LepA_C"/>
    <property type="match status" value="1"/>
</dbReference>
<dbReference type="PRINTS" id="PR00315">
    <property type="entry name" value="ELONGATNFCT"/>
</dbReference>
<dbReference type="SUPFAM" id="SSF54980">
    <property type="entry name" value="EF-G C-terminal domain-like"/>
    <property type="match status" value="2"/>
</dbReference>
<dbReference type="SUPFAM" id="SSF52540">
    <property type="entry name" value="P-loop containing nucleoside triphosphate hydrolases"/>
    <property type="match status" value="1"/>
</dbReference>
<dbReference type="PROSITE" id="PS00301">
    <property type="entry name" value="G_TR_1"/>
    <property type="match status" value="1"/>
</dbReference>
<dbReference type="PROSITE" id="PS51722">
    <property type="entry name" value="G_TR_2"/>
    <property type="match status" value="1"/>
</dbReference>
<organism>
    <name type="scientific">Lachancea thermotolerans (strain ATCC 56472 / CBS 6340 / NRRL Y-8284)</name>
    <name type="common">Yeast</name>
    <name type="synonym">Kluyveromyces thermotolerans</name>
    <dbReference type="NCBI Taxonomy" id="559295"/>
    <lineage>
        <taxon>Eukaryota</taxon>
        <taxon>Fungi</taxon>
        <taxon>Dikarya</taxon>
        <taxon>Ascomycota</taxon>
        <taxon>Saccharomycotina</taxon>
        <taxon>Saccharomycetes</taxon>
        <taxon>Saccharomycetales</taxon>
        <taxon>Saccharomycetaceae</taxon>
        <taxon>Lachancea</taxon>
    </lineage>
</organism>
<keyword id="KW-0342">GTP-binding</keyword>
<keyword id="KW-0378">Hydrolase</keyword>
<keyword id="KW-0472">Membrane</keyword>
<keyword id="KW-0496">Mitochondrion</keyword>
<keyword id="KW-0999">Mitochondrion inner membrane</keyword>
<keyword id="KW-0547">Nucleotide-binding</keyword>
<keyword id="KW-0648">Protein biosynthesis</keyword>
<keyword id="KW-1185">Reference proteome</keyword>
<keyword id="KW-0809">Transit peptide</keyword>
<comment type="function">
    <text evidence="1">Promotes mitochondrial protein synthesis. May act as a fidelity factor of the translation reaction, by catalyzing a one-codon backward translocation of tRNAs on improperly translocated ribosomes. Binds to mitochondrial ribosomes in a GTP-dependent manner.</text>
</comment>
<comment type="catalytic activity">
    <reaction evidence="1">
        <text>GTP + H2O = GDP + phosphate + H(+)</text>
        <dbReference type="Rhea" id="RHEA:19669"/>
        <dbReference type="ChEBI" id="CHEBI:15377"/>
        <dbReference type="ChEBI" id="CHEBI:15378"/>
        <dbReference type="ChEBI" id="CHEBI:37565"/>
        <dbReference type="ChEBI" id="CHEBI:43474"/>
        <dbReference type="ChEBI" id="CHEBI:58189"/>
    </reaction>
</comment>
<comment type="subcellular location">
    <subcellularLocation>
        <location evidence="1">Mitochondrion inner membrane</location>
        <topology evidence="1">Peripheral membrane protein</topology>
        <orientation evidence="1">Matrix side</orientation>
    </subcellularLocation>
</comment>
<comment type="similarity">
    <text evidence="2">Belongs to the TRAFAC class translation factor GTPase superfamily. Classic translation factor GTPase family. LepA subfamily.</text>
</comment>
<sequence length="640" mass="72250">MRRLRSLYLQSSICFRRFNHYSAKDTEALQRRLEQIPIENYRNFSIVAHVDHGKSTLSDRLLEFTGVIKAGDSNRQVLDKLEVERERGITIKAQTCTMFYYDKRRNKDYLLHLVDTPGHVDFRAEVSRSYASCGGALLLVDASQGVQAQTVANFYLAYSMNLKLIPVINKIDLDSANIPQAEAQIESTFELPRAEIIRVSAKTGINVKEDLLPAIIDRIPPPTGVGKKPFRALLVDSWYDSYLGVVLLVNIVDGVVKKGDRVVSAQTGKKYEIKELGIMYPDKVSMGCLRTGQVGYIVPGMKESKDAKIGDTIMHVGKESVTEVLDGFEDPKPMVFVGAFPADGTEFKSLDEDITRLVLNDRSVSLQRESSNALGQGWRLGFLGSLHASVFKDRLEKEYGSKLIITQPTVPYVIKFTNGEEKIITNPDDFPDLSLRKTRIDSLQEPYVEAIITLPQEYLGAVIKLCENNRGIQKEITYLNVTGQVLLKYEMPLAHLVDDFFGKLKSVSRGYGSLDYEDIGYKASDIVKLELVLNGKSVDALAQVMHRSQVERVGRKWAKKFKEYVKSQLYEVVIQARANNKVIARETIKARRKDVLAKLHASDVSRRKKLLVKQKEGKKQMKSVGNIQINQEAYQAFLRR</sequence>
<accession>C5DN84</accession>
<feature type="transit peptide" description="Mitochondrion" evidence="1">
    <location>
        <begin position="1"/>
        <end position="26"/>
    </location>
</feature>
<feature type="chain" id="PRO_0000402888" description="Translation factor GUF1, mitochondrial">
    <location>
        <begin position="27"/>
        <end position="640"/>
    </location>
</feature>
<feature type="domain" description="tr-type G">
    <location>
        <begin position="39"/>
        <end position="223"/>
    </location>
</feature>
<feature type="binding site" evidence="1">
    <location>
        <begin position="48"/>
        <end position="55"/>
    </location>
    <ligand>
        <name>GTP</name>
        <dbReference type="ChEBI" id="CHEBI:37565"/>
    </ligand>
</feature>
<feature type="binding site" evidence="1">
    <location>
        <begin position="115"/>
        <end position="119"/>
    </location>
    <ligand>
        <name>GTP</name>
        <dbReference type="ChEBI" id="CHEBI:37565"/>
    </ligand>
</feature>
<feature type="binding site" evidence="1">
    <location>
        <begin position="169"/>
        <end position="172"/>
    </location>
    <ligand>
        <name>GTP</name>
        <dbReference type="ChEBI" id="CHEBI:37565"/>
    </ligand>
</feature>
<name>GUF1_LACTC</name>
<gene>
    <name evidence="1" type="primary">GUF1</name>
    <name type="ordered locus">KLTH0G14938g</name>
</gene>